<feature type="chain" id="PRO_0000375074" description="Ribosomal protein uS12 methylthiotransferase RimO">
    <location>
        <begin position="1"/>
        <end position="466"/>
    </location>
</feature>
<feature type="domain" description="MTTase N-terminal" evidence="1">
    <location>
        <begin position="15"/>
        <end position="125"/>
    </location>
</feature>
<feature type="domain" description="Radical SAM core" evidence="2">
    <location>
        <begin position="142"/>
        <end position="380"/>
    </location>
</feature>
<feature type="domain" description="TRAM" evidence="1">
    <location>
        <begin position="382"/>
        <end position="450"/>
    </location>
</feature>
<feature type="binding site" evidence="1">
    <location>
        <position position="24"/>
    </location>
    <ligand>
        <name>[4Fe-4S] cluster</name>
        <dbReference type="ChEBI" id="CHEBI:49883"/>
        <label>1</label>
    </ligand>
</feature>
<feature type="binding site" evidence="1">
    <location>
        <position position="60"/>
    </location>
    <ligand>
        <name>[4Fe-4S] cluster</name>
        <dbReference type="ChEBI" id="CHEBI:49883"/>
        <label>1</label>
    </ligand>
</feature>
<feature type="binding site" evidence="1">
    <location>
        <position position="89"/>
    </location>
    <ligand>
        <name>[4Fe-4S] cluster</name>
        <dbReference type="ChEBI" id="CHEBI:49883"/>
        <label>1</label>
    </ligand>
</feature>
<feature type="binding site" evidence="1">
    <location>
        <position position="156"/>
    </location>
    <ligand>
        <name>[4Fe-4S] cluster</name>
        <dbReference type="ChEBI" id="CHEBI:49883"/>
        <label>2</label>
        <note>4Fe-4S-S-AdoMet</note>
    </ligand>
</feature>
<feature type="binding site" evidence="1">
    <location>
        <position position="160"/>
    </location>
    <ligand>
        <name>[4Fe-4S] cluster</name>
        <dbReference type="ChEBI" id="CHEBI:49883"/>
        <label>2</label>
        <note>4Fe-4S-S-AdoMet</note>
    </ligand>
</feature>
<feature type="binding site" evidence="1">
    <location>
        <position position="163"/>
    </location>
    <ligand>
        <name>[4Fe-4S] cluster</name>
        <dbReference type="ChEBI" id="CHEBI:49883"/>
        <label>2</label>
        <note>4Fe-4S-S-AdoMet</note>
    </ligand>
</feature>
<dbReference type="EC" id="2.8.4.4" evidence="1"/>
<dbReference type="EMBL" id="AE013598">
    <property type="protein sequence ID" value="AAW76526.1"/>
    <property type="molecule type" value="Genomic_DNA"/>
</dbReference>
<dbReference type="SMR" id="Q5GXP5"/>
<dbReference type="STRING" id="291331.XOO3272"/>
<dbReference type="KEGG" id="xoo:XOO3272"/>
<dbReference type="PATRIC" id="fig|291331.8.peg.3624"/>
<dbReference type="HOGENOM" id="CLU_018697_0_0_6"/>
<dbReference type="Proteomes" id="UP000006735">
    <property type="component" value="Chromosome"/>
</dbReference>
<dbReference type="GO" id="GO:0005829">
    <property type="term" value="C:cytosol"/>
    <property type="evidence" value="ECO:0007669"/>
    <property type="project" value="TreeGrafter"/>
</dbReference>
<dbReference type="GO" id="GO:0051539">
    <property type="term" value="F:4 iron, 4 sulfur cluster binding"/>
    <property type="evidence" value="ECO:0007669"/>
    <property type="project" value="UniProtKB-UniRule"/>
</dbReference>
<dbReference type="GO" id="GO:0035599">
    <property type="term" value="F:aspartic acid methylthiotransferase activity"/>
    <property type="evidence" value="ECO:0007669"/>
    <property type="project" value="TreeGrafter"/>
</dbReference>
<dbReference type="GO" id="GO:0046872">
    <property type="term" value="F:metal ion binding"/>
    <property type="evidence" value="ECO:0007669"/>
    <property type="project" value="UniProtKB-KW"/>
</dbReference>
<dbReference type="GO" id="GO:0103039">
    <property type="term" value="F:protein methylthiotransferase activity"/>
    <property type="evidence" value="ECO:0007669"/>
    <property type="project" value="UniProtKB-EC"/>
</dbReference>
<dbReference type="GO" id="GO:0006400">
    <property type="term" value="P:tRNA modification"/>
    <property type="evidence" value="ECO:0007669"/>
    <property type="project" value="InterPro"/>
</dbReference>
<dbReference type="CDD" id="cd01335">
    <property type="entry name" value="Radical_SAM"/>
    <property type="match status" value="1"/>
</dbReference>
<dbReference type="FunFam" id="2.40.50.140:FF:000210">
    <property type="entry name" value="Ribosomal protein S12 methylthiotransferase RimO"/>
    <property type="match status" value="1"/>
</dbReference>
<dbReference type="FunFam" id="3.40.50.12160:FF:000002">
    <property type="entry name" value="Ribosomal protein S12 methylthiotransferase RimO"/>
    <property type="match status" value="1"/>
</dbReference>
<dbReference type="FunFam" id="3.80.30.20:FF:000001">
    <property type="entry name" value="tRNA-2-methylthio-N(6)-dimethylallyladenosine synthase 2"/>
    <property type="match status" value="1"/>
</dbReference>
<dbReference type="Gene3D" id="3.40.50.12160">
    <property type="entry name" value="Methylthiotransferase, N-terminal domain"/>
    <property type="match status" value="1"/>
</dbReference>
<dbReference type="Gene3D" id="2.40.50.140">
    <property type="entry name" value="Nucleic acid-binding proteins"/>
    <property type="match status" value="1"/>
</dbReference>
<dbReference type="Gene3D" id="3.80.30.20">
    <property type="entry name" value="tm_1862 like domain"/>
    <property type="match status" value="1"/>
</dbReference>
<dbReference type="HAMAP" id="MF_01865">
    <property type="entry name" value="MTTase_RimO"/>
    <property type="match status" value="1"/>
</dbReference>
<dbReference type="InterPro" id="IPR006638">
    <property type="entry name" value="Elp3/MiaA/NifB-like_rSAM"/>
</dbReference>
<dbReference type="InterPro" id="IPR005839">
    <property type="entry name" value="Methylthiotransferase"/>
</dbReference>
<dbReference type="InterPro" id="IPR020612">
    <property type="entry name" value="Methylthiotransferase_CS"/>
</dbReference>
<dbReference type="InterPro" id="IPR013848">
    <property type="entry name" value="Methylthiotransferase_N"/>
</dbReference>
<dbReference type="InterPro" id="IPR038135">
    <property type="entry name" value="Methylthiotransferase_N_sf"/>
</dbReference>
<dbReference type="InterPro" id="IPR012340">
    <property type="entry name" value="NA-bd_OB-fold"/>
</dbReference>
<dbReference type="InterPro" id="IPR005840">
    <property type="entry name" value="Ribosomal_uS12_MeSTrfase_RimO"/>
</dbReference>
<dbReference type="InterPro" id="IPR007197">
    <property type="entry name" value="rSAM"/>
</dbReference>
<dbReference type="InterPro" id="IPR023404">
    <property type="entry name" value="rSAM_horseshoe"/>
</dbReference>
<dbReference type="InterPro" id="IPR002792">
    <property type="entry name" value="TRAM_dom"/>
</dbReference>
<dbReference type="NCBIfam" id="TIGR01125">
    <property type="entry name" value="30S ribosomal protein S12 methylthiotransferase RimO"/>
    <property type="match status" value="1"/>
</dbReference>
<dbReference type="NCBIfam" id="TIGR00089">
    <property type="entry name" value="MiaB/RimO family radical SAM methylthiotransferase"/>
    <property type="match status" value="1"/>
</dbReference>
<dbReference type="PANTHER" id="PTHR43837">
    <property type="entry name" value="RIBOSOMAL PROTEIN S12 METHYLTHIOTRANSFERASE RIMO"/>
    <property type="match status" value="1"/>
</dbReference>
<dbReference type="PANTHER" id="PTHR43837:SF1">
    <property type="entry name" value="RIBOSOMAL PROTEIN US12 METHYLTHIOTRANSFERASE RIMO"/>
    <property type="match status" value="1"/>
</dbReference>
<dbReference type="Pfam" id="PF04055">
    <property type="entry name" value="Radical_SAM"/>
    <property type="match status" value="1"/>
</dbReference>
<dbReference type="Pfam" id="PF18693">
    <property type="entry name" value="TRAM_2"/>
    <property type="match status" value="1"/>
</dbReference>
<dbReference type="Pfam" id="PF00919">
    <property type="entry name" value="UPF0004"/>
    <property type="match status" value="1"/>
</dbReference>
<dbReference type="SFLD" id="SFLDG01082">
    <property type="entry name" value="B12-binding_domain_containing"/>
    <property type="match status" value="1"/>
</dbReference>
<dbReference type="SFLD" id="SFLDG01061">
    <property type="entry name" value="methylthiotransferase"/>
    <property type="match status" value="1"/>
</dbReference>
<dbReference type="SFLD" id="SFLDF00274">
    <property type="entry name" value="ribosomal_protein_S12_methylth"/>
    <property type="match status" value="1"/>
</dbReference>
<dbReference type="SMART" id="SM00729">
    <property type="entry name" value="Elp3"/>
    <property type="match status" value="1"/>
</dbReference>
<dbReference type="SUPFAM" id="SSF102114">
    <property type="entry name" value="Radical SAM enzymes"/>
    <property type="match status" value="1"/>
</dbReference>
<dbReference type="PROSITE" id="PS51449">
    <property type="entry name" value="MTTASE_N"/>
    <property type="match status" value="1"/>
</dbReference>
<dbReference type="PROSITE" id="PS01278">
    <property type="entry name" value="MTTASE_RADICAL"/>
    <property type="match status" value="1"/>
</dbReference>
<dbReference type="PROSITE" id="PS51918">
    <property type="entry name" value="RADICAL_SAM"/>
    <property type="match status" value="1"/>
</dbReference>
<dbReference type="PROSITE" id="PS50926">
    <property type="entry name" value="TRAM"/>
    <property type="match status" value="1"/>
</dbReference>
<organism>
    <name type="scientific">Xanthomonas oryzae pv. oryzae (strain KACC10331 / KXO85)</name>
    <dbReference type="NCBI Taxonomy" id="291331"/>
    <lineage>
        <taxon>Bacteria</taxon>
        <taxon>Pseudomonadati</taxon>
        <taxon>Pseudomonadota</taxon>
        <taxon>Gammaproteobacteria</taxon>
        <taxon>Lysobacterales</taxon>
        <taxon>Lysobacteraceae</taxon>
        <taxon>Xanthomonas</taxon>
    </lineage>
</organism>
<sequence length="466" mass="51489">MKSIDYVNPVKNQVPKVGFVSLGCPKALVDSERILTQLRVEGYDIVPSYDAADVVVVNTCGFIDSAVTESLDAIGEAMNANGKVIVTGCLGKRPEQIREAYPQVLAVSGPQDYQSVMEAVHAALPPRHDPFVDLVPDYGIKLTPRHYAYLKISEGCNHRCSFCIIPSMRGDLVSRPVDEVLCEAERLVRGGVKELLVVSQDTSAYGVDLKYAERPWRDRMYQTRMKALCEGLSELGVWTRLHYVYPYPHVDDVLPLMAEGKLLPYLDIPFQHASPRILKLMKRPGAVEKTLQRVQRWKAMCPEITVRSTFIVGFPGETDAEFESLLDFLDQAQLDRVGAFAYSPVHGASANALPDPVPEEVKQERLARFMAKQAEISALRLEAKIGSVQQCLVDLIEDDIAVARSRADAPEIDGLVHIQNGGELGLKVGDLVDVEITDSDEHDLFGDALPANVVPQQGRALNLQMV</sequence>
<comment type="function">
    <text evidence="1">Catalyzes the methylthiolation of an aspartic acid residue of ribosomal protein uS12.</text>
</comment>
<comment type="catalytic activity">
    <reaction evidence="1">
        <text>L-aspartate(89)-[ribosomal protein uS12]-hydrogen + (sulfur carrier)-SH + AH2 + 2 S-adenosyl-L-methionine = 3-methylsulfanyl-L-aspartate(89)-[ribosomal protein uS12]-hydrogen + (sulfur carrier)-H + 5'-deoxyadenosine + L-methionine + A + S-adenosyl-L-homocysteine + 2 H(+)</text>
        <dbReference type="Rhea" id="RHEA:37087"/>
        <dbReference type="Rhea" id="RHEA-COMP:10460"/>
        <dbReference type="Rhea" id="RHEA-COMP:10461"/>
        <dbReference type="Rhea" id="RHEA-COMP:14737"/>
        <dbReference type="Rhea" id="RHEA-COMP:14739"/>
        <dbReference type="ChEBI" id="CHEBI:13193"/>
        <dbReference type="ChEBI" id="CHEBI:15378"/>
        <dbReference type="ChEBI" id="CHEBI:17319"/>
        <dbReference type="ChEBI" id="CHEBI:17499"/>
        <dbReference type="ChEBI" id="CHEBI:29917"/>
        <dbReference type="ChEBI" id="CHEBI:29961"/>
        <dbReference type="ChEBI" id="CHEBI:57844"/>
        <dbReference type="ChEBI" id="CHEBI:57856"/>
        <dbReference type="ChEBI" id="CHEBI:59789"/>
        <dbReference type="ChEBI" id="CHEBI:64428"/>
        <dbReference type="ChEBI" id="CHEBI:73599"/>
        <dbReference type="EC" id="2.8.4.4"/>
    </reaction>
</comment>
<comment type="cofactor">
    <cofactor evidence="1">
        <name>[4Fe-4S] cluster</name>
        <dbReference type="ChEBI" id="CHEBI:49883"/>
    </cofactor>
    <text evidence="1">Binds 2 [4Fe-4S] clusters. One cluster is coordinated with 3 cysteines and an exchangeable S-adenosyl-L-methionine.</text>
</comment>
<comment type="subcellular location">
    <subcellularLocation>
        <location evidence="1">Cytoplasm</location>
    </subcellularLocation>
</comment>
<comment type="similarity">
    <text evidence="1">Belongs to the methylthiotransferase family. RimO subfamily.</text>
</comment>
<reference key="1">
    <citation type="journal article" date="2005" name="Nucleic Acids Res.">
        <title>The genome sequence of Xanthomonas oryzae pathovar oryzae KACC10331, the bacterial blight pathogen of rice.</title>
        <authorList>
            <person name="Lee B.-M."/>
            <person name="Park Y.-J."/>
            <person name="Park D.-S."/>
            <person name="Kang H.-W."/>
            <person name="Kim J.-G."/>
            <person name="Song E.-S."/>
            <person name="Park I.-C."/>
            <person name="Yoon U.-H."/>
            <person name="Hahn J.-H."/>
            <person name="Koo B.-S."/>
            <person name="Lee G.-B."/>
            <person name="Kim H."/>
            <person name="Park H.-S."/>
            <person name="Yoon K.-O."/>
            <person name="Kim J.-H."/>
            <person name="Jung C.-H."/>
            <person name="Koh N.-H."/>
            <person name="Seo J.-S."/>
            <person name="Go S.-J."/>
        </authorList>
    </citation>
    <scope>NUCLEOTIDE SEQUENCE [LARGE SCALE GENOMIC DNA]</scope>
    <source>
        <strain>KACC10331 / KXO85</strain>
    </source>
</reference>
<keyword id="KW-0004">4Fe-4S</keyword>
<keyword id="KW-0963">Cytoplasm</keyword>
<keyword id="KW-0408">Iron</keyword>
<keyword id="KW-0411">Iron-sulfur</keyword>
<keyword id="KW-0479">Metal-binding</keyword>
<keyword id="KW-1185">Reference proteome</keyword>
<keyword id="KW-0949">S-adenosyl-L-methionine</keyword>
<keyword id="KW-0808">Transferase</keyword>
<proteinExistence type="inferred from homology"/>
<evidence type="ECO:0000255" key="1">
    <source>
        <dbReference type="HAMAP-Rule" id="MF_01865"/>
    </source>
</evidence>
<evidence type="ECO:0000255" key="2">
    <source>
        <dbReference type="PROSITE-ProRule" id="PRU01266"/>
    </source>
</evidence>
<name>RIMO_XANOR</name>
<accession>Q5GXP5</accession>
<protein>
    <recommendedName>
        <fullName evidence="1">Ribosomal protein uS12 methylthiotransferase RimO</fullName>
        <shortName evidence="1">uS12 MTTase</shortName>
        <shortName evidence="1">uS12 methylthiotransferase</shortName>
        <ecNumber evidence="1">2.8.4.4</ecNumber>
    </recommendedName>
    <alternativeName>
        <fullName evidence="1">Ribosomal protein uS12 (aspartate-C(3))-methylthiotransferase</fullName>
    </alternativeName>
    <alternativeName>
        <fullName evidence="1">Ribosome maturation factor RimO</fullName>
    </alternativeName>
</protein>
<gene>
    <name evidence="1" type="primary">rimO</name>
    <name type="ordered locus">XOO3272</name>
</gene>